<accession>Q7V303</accession>
<reference key="1">
    <citation type="journal article" date="2003" name="Nature">
        <title>Genome divergence in two Prochlorococcus ecotypes reflects oceanic niche differentiation.</title>
        <authorList>
            <person name="Rocap G."/>
            <person name="Larimer F.W."/>
            <person name="Lamerdin J.E."/>
            <person name="Malfatti S."/>
            <person name="Chain P."/>
            <person name="Ahlgren N.A."/>
            <person name="Arellano A."/>
            <person name="Coleman M."/>
            <person name="Hauser L."/>
            <person name="Hess W.R."/>
            <person name="Johnson Z.I."/>
            <person name="Land M.L."/>
            <person name="Lindell D."/>
            <person name="Post A.F."/>
            <person name="Regala W."/>
            <person name="Shah M."/>
            <person name="Shaw S.L."/>
            <person name="Steglich C."/>
            <person name="Sullivan M.B."/>
            <person name="Ting C.S."/>
            <person name="Tolonen A."/>
            <person name="Webb E.A."/>
            <person name="Zinser E.R."/>
            <person name="Chisholm S.W."/>
        </authorList>
    </citation>
    <scope>NUCLEOTIDE SEQUENCE [LARGE SCALE GENOMIC DNA]</scope>
    <source>
        <strain>CCMP1986 / NIES-2087 / MED4</strain>
    </source>
</reference>
<dbReference type="EC" id="7.1.1.-" evidence="1"/>
<dbReference type="EMBL" id="BX548174">
    <property type="protein sequence ID" value="CAE18752.1"/>
    <property type="molecule type" value="Genomic_DNA"/>
</dbReference>
<dbReference type="RefSeq" id="WP_011131930.1">
    <property type="nucleotide sequence ID" value="NC_005072.1"/>
</dbReference>
<dbReference type="SMR" id="Q7V303"/>
<dbReference type="STRING" id="59919.PMM0293"/>
<dbReference type="KEGG" id="pmm:PMM0293"/>
<dbReference type="eggNOG" id="COG0377">
    <property type="taxonomic scope" value="Bacteria"/>
</dbReference>
<dbReference type="HOGENOM" id="CLU_055737_2_0_3"/>
<dbReference type="OrthoDB" id="9786737at2"/>
<dbReference type="Proteomes" id="UP000001026">
    <property type="component" value="Chromosome"/>
</dbReference>
<dbReference type="GO" id="GO:0031676">
    <property type="term" value="C:plasma membrane-derived thylakoid membrane"/>
    <property type="evidence" value="ECO:0007669"/>
    <property type="project" value="UniProtKB-SubCell"/>
</dbReference>
<dbReference type="GO" id="GO:0045271">
    <property type="term" value="C:respiratory chain complex I"/>
    <property type="evidence" value="ECO:0007669"/>
    <property type="project" value="TreeGrafter"/>
</dbReference>
<dbReference type="GO" id="GO:0051539">
    <property type="term" value="F:4 iron, 4 sulfur cluster binding"/>
    <property type="evidence" value="ECO:0007669"/>
    <property type="project" value="UniProtKB-KW"/>
</dbReference>
<dbReference type="GO" id="GO:0005506">
    <property type="term" value="F:iron ion binding"/>
    <property type="evidence" value="ECO:0007669"/>
    <property type="project" value="UniProtKB-UniRule"/>
</dbReference>
<dbReference type="GO" id="GO:0008137">
    <property type="term" value="F:NADH dehydrogenase (ubiquinone) activity"/>
    <property type="evidence" value="ECO:0007669"/>
    <property type="project" value="InterPro"/>
</dbReference>
<dbReference type="GO" id="GO:0048038">
    <property type="term" value="F:quinone binding"/>
    <property type="evidence" value="ECO:0007669"/>
    <property type="project" value="UniProtKB-KW"/>
</dbReference>
<dbReference type="GO" id="GO:0009060">
    <property type="term" value="P:aerobic respiration"/>
    <property type="evidence" value="ECO:0007669"/>
    <property type="project" value="TreeGrafter"/>
</dbReference>
<dbReference type="GO" id="GO:0015990">
    <property type="term" value="P:electron transport coupled proton transport"/>
    <property type="evidence" value="ECO:0007669"/>
    <property type="project" value="TreeGrafter"/>
</dbReference>
<dbReference type="GO" id="GO:0019684">
    <property type="term" value="P:photosynthesis, light reaction"/>
    <property type="evidence" value="ECO:0007669"/>
    <property type="project" value="UniProtKB-UniRule"/>
</dbReference>
<dbReference type="FunFam" id="3.40.50.12280:FF:000003">
    <property type="entry name" value="NAD(P)H-quinone oxidoreductase subunit K, chloroplastic"/>
    <property type="match status" value="1"/>
</dbReference>
<dbReference type="Gene3D" id="3.40.50.12280">
    <property type="match status" value="1"/>
</dbReference>
<dbReference type="HAMAP" id="MF_01356">
    <property type="entry name" value="NDH1_NuoB"/>
    <property type="match status" value="1"/>
</dbReference>
<dbReference type="InterPro" id="IPR006137">
    <property type="entry name" value="NADH_UbQ_OxRdtase-like_20kDa"/>
</dbReference>
<dbReference type="InterPro" id="IPR006138">
    <property type="entry name" value="NADH_UQ_OxRdtase_20Kd_su"/>
</dbReference>
<dbReference type="NCBIfam" id="TIGR01957">
    <property type="entry name" value="nuoB_fam"/>
    <property type="match status" value="1"/>
</dbReference>
<dbReference type="NCBIfam" id="NF005012">
    <property type="entry name" value="PRK06411.1"/>
    <property type="match status" value="1"/>
</dbReference>
<dbReference type="PANTHER" id="PTHR11995">
    <property type="entry name" value="NADH DEHYDROGENASE"/>
    <property type="match status" value="1"/>
</dbReference>
<dbReference type="PANTHER" id="PTHR11995:SF14">
    <property type="entry name" value="NADH DEHYDROGENASE [UBIQUINONE] IRON-SULFUR PROTEIN 7, MITOCHONDRIAL"/>
    <property type="match status" value="1"/>
</dbReference>
<dbReference type="Pfam" id="PF01058">
    <property type="entry name" value="Oxidored_q6"/>
    <property type="match status" value="1"/>
</dbReference>
<dbReference type="SUPFAM" id="SSF56770">
    <property type="entry name" value="HydA/Nqo6-like"/>
    <property type="match status" value="1"/>
</dbReference>
<dbReference type="PROSITE" id="PS01150">
    <property type="entry name" value="COMPLEX1_20K"/>
    <property type="match status" value="1"/>
</dbReference>
<comment type="function">
    <text evidence="1">NDH-1 shuttles electrons from an unknown electron donor, via FMN and iron-sulfur (Fe-S) centers, to quinones in the respiratory and/or the photosynthetic chain. The immediate electron acceptor for the enzyme in this species is believed to be plastoquinone. Couples the redox reaction to proton translocation, and thus conserves the redox energy in a proton gradient. Cyanobacterial NDH-1 also plays a role in inorganic carbon-concentration.</text>
</comment>
<comment type="catalytic activity">
    <reaction evidence="1">
        <text>a plastoquinone + NADH + (n+1) H(+)(in) = a plastoquinol + NAD(+) + n H(+)(out)</text>
        <dbReference type="Rhea" id="RHEA:42608"/>
        <dbReference type="Rhea" id="RHEA-COMP:9561"/>
        <dbReference type="Rhea" id="RHEA-COMP:9562"/>
        <dbReference type="ChEBI" id="CHEBI:15378"/>
        <dbReference type="ChEBI" id="CHEBI:17757"/>
        <dbReference type="ChEBI" id="CHEBI:57540"/>
        <dbReference type="ChEBI" id="CHEBI:57945"/>
        <dbReference type="ChEBI" id="CHEBI:62192"/>
    </reaction>
</comment>
<comment type="catalytic activity">
    <reaction evidence="1">
        <text>a plastoquinone + NADPH + (n+1) H(+)(in) = a plastoquinol + NADP(+) + n H(+)(out)</text>
        <dbReference type="Rhea" id="RHEA:42612"/>
        <dbReference type="Rhea" id="RHEA-COMP:9561"/>
        <dbReference type="Rhea" id="RHEA-COMP:9562"/>
        <dbReference type="ChEBI" id="CHEBI:15378"/>
        <dbReference type="ChEBI" id="CHEBI:17757"/>
        <dbReference type="ChEBI" id="CHEBI:57783"/>
        <dbReference type="ChEBI" id="CHEBI:58349"/>
        <dbReference type="ChEBI" id="CHEBI:62192"/>
    </reaction>
</comment>
<comment type="cofactor">
    <cofactor evidence="1">
        <name>[4Fe-4S] cluster</name>
        <dbReference type="ChEBI" id="CHEBI:49883"/>
    </cofactor>
    <text evidence="1">Binds 1 [4Fe-4S] cluster.</text>
</comment>
<comment type="subunit">
    <text evidence="1">NDH-1 can be composed of about 15 different subunits; different subcomplexes with different compositions have been identified which probably have different functions.</text>
</comment>
<comment type="subcellular location">
    <subcellularLocation>
        <location evidence="1">Cellular thylakoid membrane</location>
        <topology evidence="1">Peripheral membrane protein</topology>
        <orientation evidence="1">Cytoplasmic side</orientation>
    </subcellularLocation>
</comment>
<comment type="similarity">
    <text evidence="1">Belongs to the complex I 20 kDa subunit family.</text>
</comment>
<protein>
    <recommendedName>
        <fullName evidence="1">NAD(P)H-quinone oxidoreductase subunit K</fullName>
        <ecNumber evidence="1">7.1.1.-</ecNumber>
    </recommendedName>
    <alternativeName>
        <fullName evidence="1">NAD(P)H dehydrogenase I subunit K</fullName>
    </alternativeName>
    <alternativeName>
        <fullName evidence="1">NDH-1 subunit K</fullName>
        <shortName evidence="1">NDH-K</shortName>
    </alternativeName>
</protein>
<sequence>MNNSLSPKAIRELREETCNPLGAPQVTTDLSENIIMTSLDDLHNWARLSSLWPLLYGTACCFIEFAALIGSRFDFDRFGLVPRSSPRQADLLIVAGTVTMKMAPALVRLYEQMPEPKYVIAMGACTITGGMFSADSTTAVRGVDKLIPVDLYLPGCPPRPEAIFDAVIKLRKKVANESILERNKSEQTHRYLTVDHEMNLVFSENTGEYLNKKSEKSIESSKLNPVEESSENIYETNSIDEVIK</sequence>
<name>NDHK_PROMP</name>
<feature type="chain" id="PRO_0000358459" description="NAD(P)H-quinone oxidoreductase subunit K">
    <location>
        <begin position="1"/>
        <end position="244"/>
    </location>
</feature>
<feature type="region of interest" description="Disordered" evidence="2">
    <location>
        <begin position="213"/>
        <end position="244"/>
    </location>
</feature>
<feature type="compositionally biased region" description="Polar residues" evidence="2">
    <location>
        <begin position="231"/>
        <end position="244"/>
    </location>
</feature>
<feature type="binding site" evidence="1">
    <location>
        <position position="60"/>
    </location>
    <ligand>
        <name>[4Fe-4S] cluster</name>
        <dbReference type="ChEBI" id="CHEBI:49883"/>
    </ligand>
</feature>
<feature type="binding site" evidence="1">
    <location>
        <position position="61"/>
    </location>
    <ligand>
        <name>[4Fe-4S] cluster</name>
        <dbReference type="ChEBI" id="CHEBI:49883"/>
    </ligand>
</feature>
<feature type="binding site" evidence="1">
    <location>
        <position position="125"/>
    </location>
    <ligand>
        <name>[4Fe-4S] cluster</name>
        <dbReference type="ChEBI" id="CHEBI:49883"/>
    </ligand>
</feature>
<feature type="binding site" evidence="1">
    <location>
        <position position="156"/>
    </location>
    <ligand>
        <name>[4Fe-4S] cluster</name>
        <dbReference type="ChEBI" id="CHEBI:49883"/>
    </ligand>
</feature>
<gene>
    <name evidence="1" type="primary">ndhK</name>
    <name type="ordered locus">PMM0293</name>
</gene>
<evidence type="ECO:0000255" key="1">
    <source>
        <dbReference type="HAMAP-Rule" id="MF_01356"/>
    </source>
</evidence>
<evidence type="ECO:0000256" key="2">
    <source>
        <dbReference type="SAM" id="MobiDB-lite"/>
    </source>
</evidence>
<keyword id="KW-0004">4Fe-4S</keyword>
<keyword id="KW-0408">Iron</keyword>
<keyword id="KW-0411">Iron-sulfur</keyword>
<keyword id="KW-0472">Membrane</keyword>
<keyword id="KW-0479">Metal-binding</keyword>
<keyword id="KW-0520">NAD</keyword>
<keyword id="KW-0521">NADP</keyword>
<keyword id="KW-0618">Plastoquinone</keyword>
<keyword id="KW-0874">Quinone</keyword>
<keyword id="KW-0793">Thylakoid</keyword>
<keyword id="KW-1278">Translocase</keyword>
<keyword id="KW-0813">Transport</keyword>
<proteinExistence type="inferred from homology"/>
<organism>
    <name type="scientific">Prochlorococcus marinus subsp. pastoris (strain CCMP1986 / NIES-2087 / MED4)</name>
    <dbReference type="NCBI Taxonomy" id="59919"/>
    <lineage>
        <taxon>Bacteria</taxon>
        <taxon>Bacillati</taxon>
        <taxon>Cyanobacteriota</taxon>
        <taxon>Cyanophyceae</taxon>
        <taxon>Synechococcales</taxon>
        <taxon>Prochlorococcaceae</taxon>
        <taxon>Prochlorococcus</taxon>
    </lineage>
</organism>